<protein>
    <recommendedName>
        <fullName evidence="1">NAD(P)H-quinone oxidoreductase subunit M</fullName>
        <ecNumber evidence="1">7.1.1.-</ecNumber>
    </recommendedName>
    <alternativeName>
        <fullName evidence="1">NAD(P)H dehydrogenase I subunit M</fullName>
        <shortName evidence="1">NDH-1 subunit M</shortName>
        <shortName evidence="1">NDH-M</shortName>
    </alternativeName>
</protein>
<name>NDHM_PICP2</name>
<dbReference type="EC" id="7.1.1.-" evidence="1"/>
<dbReference type="EMBL" id="CP000951">
    <property type="protein sequence ID" value="ACA98576.1"/>
    <property type="molecule type" value="Genomic_DNA"/>
</dbReference>
<dbReference type="RefSeq" id="WP_012306200.1">
    <property type="nucleotide sequence ID" value="NZ_JAHHPU010000001.1"/>
</dbReference>
<dbReference type="SMR" id="B1XPU8"/>
<dbReference type="STRING" id="32049.SYNPCC7002_A0569"/>
<dbReference type="KEGG" id="syp:SYNPCC7002_A0569"/>
<dbReference type="eggNOG" id="ENOG5031AQM">
    <property type="taxonomic scope" value="Bacteria"/>
</dbReference>
<dbReference type="HOGENOM" id="CLU_137431_0_0_3"/>
<dbReference type="Proteomes" id="UP000001688">
    <property type="component" value="Chromosome"/>
</dbReference>
<dbReference type="GO" id="GO:0031676">
    <property type="term" value="C:plasma membrane-derived thylakoid membrane"/>
    <property type="evidence" value="ECO:0007669"/>
    <property type="project" value="UniProtKB-SubCell"/>
</dbReference>
<dbReference type="GO" id="GO:0016655">
    <property type="term" value="F:oxidoreductase activity, acting on NAD(P)H, quinone or similar compound as acceptor"/>
    <property type="evidence" value="ECO:0007669"/>
    <property type="project" value="UniProtKB-UniRule"/>
</dbReference>
<dbReference type="GO" id="GO:0048038">
    <property type="term" value="F:quinone binding"/>
    <property type="evidence" value="ECO:0007669"/>
    <property type="project" value="UniProtKB-KW"/>
</dbReference>
<dbReference type="HAMAP" id="MF_01352">
    <property type="entry name" value="NDH1_NDH1M"/>
    <property type="match status" value="1"/>
</dbReference>
<dbReference type="InterPro" id="IPR018922">
    <property type="entry name" value="NdhM"/>
</dbReference>
<dbReference type="PANTHER" id="PTHR36900">
    <property type="entry name" value="NAD(P)H-QUINONE OXIDOREDUCTASE SUBUNIT M, CHLOROPLASTIC"/>
    <property type="match status" value="1"/>
</dbReference>
<dbReference type="PANTHER" id="PTHR36900:SF1">
    <property type="entry name" value="NAD(P)H-QUINONE OXIDOREDUCTASE SUBUNIT M, CHLOROPLASTIC"/>
    <property type="match status" value="1"/>
</dbReference>
<dbReference type="Pfam" id="PF10664">
    <property type="entry name" value="NdhM"/>
    <property type="match status" value="1"/>
</dbReference>
<keyword id="KW-0472">Membrane</keyword>
<keyword id="KW-0520">NAD</keyword>
<keyword id="KW-0521">NADP</keyword>
<keyword id="KW-0618">Plastoquinone</keyword>
<keyword id="KW-0874">Quinone</keyword>
<keyword id="KW-1185">Reference proteome</keyword>
<keyword id="KW-0793">Thylakoid</keyword>
<keyword id="KW-1278">Translocase</keyword>
<keyword id="KW-0813">Transport</keyword>
<feature type="chain" id="PRO_0000352200" description="NAD(P)H-quinone oxidoreductase subunit M">
    <location>
        <begin position="1"/>
        <end position="119"/>
    </location>
</feature>
<accession>B1XPU8</accession>
<sequence>MLLKSTTRHVRIYTAEIQKNELIPSETVLTLDVDPDNEFVWPEESLQKVYRQFDALVESNSGEDLTEYNLRRIGSDLEAFIRDLLQKGELRYNLDSRVMNFSMGLPQMDHPDSQGAYLQ</sequence>
<proteinExistence type="inferred from homology"/>
<evidence type="ECO:0000255" key="1">
    <source>
        <dbReference type="HAMAP-Rule" id="MF_01352"/>
    </source>
</evidence>
<reference key="1">
    <citation type="submission" date="2008-02" db="EMBL/GenBank/DDBJ databases">
        <title>Complete sequence of Synechococcus sp. PCC 7002.</title>
        <authorList>
            <person name="Li T."/>
            <person name="Zhao J."/>
            <person name="Zhao C."/>
            <person name="Liu Z."/>
            <person name="Zhao F."/>
            <person name="Marquardt J."/>
            <person name="Nomura C.T."/>
            <person name="Persson S."/>
            <person name="Detter J.C."/>
            <person name="Richardson P.M."/>
            <person name="Lanz C."/>
            <person name="Schuster S.C."/>
            <person name="Wang J."/>
            <person name="Li S."/>
            <person name="Huang X."/>
            <person name="Cai T."/>
            <person name="Yu Z."/>
            <person name="Luo J."/>
            <person name="Zhao J."/>
            <person name="Bryant D.A."/>
        </authorList>
    </citation>
    <scope>NUCLEOTIDE SEQUENCE [LARGE SCALE GENOMIC DNA]</scope>
    <source>
        <strain>ATCC 27264 / PCC 7002 / PR-6</strain>
    </source>
</reference>
<comment type="function">
    <text evidence="1">NDH-1 shuttles electrons from an unknown electron donor, via FMN and iron-sulfur (Fe-S) centers, to quinones in the respiratory and/or the photosynthetic chain. The immediate electron acceptor for the enzyme in this species is believed to be plastoquinone. Couples the redox reaction to proton translocation, and thus conserves the redox energy in a proton gradient. Cyanobacterial NDH-1 also plays a role in inorganic carbon-concentration.</text>
</comment>
<comment type="catalytic activity">
    <reaction evidence="1">
        <text>a plastoquinone + NADH + (n+1) H(+)(in) = a plastoquinol + NAD(+) + n H(+)(out)</text>
        <dbReference type="Rhea" id="RHEA:42608"/>
        <dbReference type="Rhea" id="RHEA-COMP:9561"/>
        <dbReference type="Rhea" id="RHEA-COMP:9562"/>
        <dbReference type="ChEBI" id="CHEBI:15378"/>
        <dbReference type="ChEBI" id="CHEBI:17757"/>
        <dbReference type="ChEBI" id="CHEBI:57540"/>
        <dbReference type="ChEBI" id="CHEBI:57945"/>
        <dbReference type="ChEBI" id="CHEBI:62192"/>
    </reaction>
</comment>
<comment type="catalytic activity">
    <reaction evidence="1">
        <text>a plastoquinone + NADPH + (n+1) H(+)(in) = a plastoquinol + NADP(+) + n H(+)(out)</text>
        <dbReference type="Rhea" id="RHEA:42612"/>
        <dbReference type="Rhea" id="RHEA-COMP:9561"/>
        <dbReference type="Rhea" id="RHEA-COMP:9562"/>
        <dbReference type="ChEBI" id="CHEBI:15378"/>
        <dbReference type="ChEBI" id="CHEBI:17757"/>
        <dbReference type="ChEBI" id="CHEBI:57783"/>
        <dbReference type="ChEBI" id="CHEBI:58349"/>
        <dbReference type="ChEBI" id="CHEBI:62192"/>
    </reaction>
</comment>
<comment type="subunit">
    <text evidence="1">NDH-1 can be composed of about 15 different subunits; different subcomplexes with different compositions have been identified which probably have different functions.</text>
</comment>
<comment type="subcellular location">
    <subcellularLocation>
        <location evidence="1">Cellular thylakoid membrane</location>
        <topology evidence="1">Peripheral membrane protein</topology>
        <orientation evidence="1">Cytoplasmic side</orientation>
    </subcellularLocation>
</comment>
<comment type="similarity">
    <text evidence="1">Belongs to the complex I NdhM subunit family.</text>
</comment>
<organism>
    <name type="scientific">Picosynechococcus sp. (strain ATCC 27264 / PCC 7002 / PR-6)</name>
    <name type="common">Agmenellum quadruplicatum</name>
    <dbReference type="NCBI Taxonomy" id="32049"/>
    <lineage>
        <taxon>Bacteria</taxon>
        <taxon>Bacillati</taxon>
        <taxon>Cyanobacteriota</taxon>
        <taxon>Cyanophyceae</taxon>
        <taxon>Oscillatoriophycideae</taxon>
        <taxon>Chroococcales</taxon>
        <taxon>Geminocystaceae</taxon>
        <taxon>Picosynechococcus</taxon>
    </lineage>
</organism>
<gene>
    <name evidence="1" type="primary">ndhM</name>
    <name type="ordered locus">SYNPCC7002_A0569</name>
</gene>